<keyword id="KW-0131">Cell cycle</keyword>
<keyword id="KW-0132">Cell division</keyword>
<keyword id="KW-0717">Septation</keyword>
<sequence>MSLKKSPFFELRSGSVDTLLFTVKTTDLDALRAELVKRFEATPEFFADDVVAIDVRRLAEGERVALSDIRQMLNDVRMRPVGVVAQASQAWAAEAGLPLLEARDRRGATAKPEPADEAEPPVAAAAAEAVPEPAPELAPSAPTTGAQTLVIDRPLRSGQQIYAKGDLVVLAPVSHGAEIIAEGNIHIYAPLRGRALAGVHGNHDARIFCTCLEPELISIAGIYRTTENPLPADILGKAVQIRLEEEKLMIEPLRLT</sequence>
<accession>A4JCA7</accession>
<dbReference type="EMBL" id="CP000614">
    <property type="protein sequence ID" value="ABO53910.1"/>
    <property type="molecule type" value="Genomic_DNA"/>
</dbReference>
<dbReference type="SMR" id="A4JCA7"/>
<dbReference type="KEGG" id="bvi:Bcep1808_0899"/>
<dbReference type="eggNOG" id="COG0850">
    <property type="taxonomic scope" value="Bacteria"/>
</dbReference>
<dbReference type="HOGENOM" id="CLU_067812_0_1_4"/>
<dbReference type="Proteomes" id="UP000002287">
    <property type="component" value="Chromosome 1"/>
</dbReference>
<dbReference type="GO" id="GO:0000902">
    <property type="term" value="P:cell morphogenesis"/>
    <property type="evidence" value="ECO:0007669"/>
    <property type="project" value="InterPro"/>
</dbReference>
<dbReference type="GO" id="GO:0000917">
    <property type="term" value="P:division septum assembly"/>
    <property type="evidence" value="ECO:0007669"/>
    <property type="project" value="UniProtKB-KW"/>
</dbReference>
<dbReference type="GO" id="GO:0051302">
    <property type="term" value="P:regulation of cell division"/>
    <property type="evidence" value="ECO:0007669"/>
    <property type="project" value="InterPro"/>
</dbReference>
<dbReference type="GO" id="GO:1901891">
    <property type="term" value="P:regulation of cell septum assembly"/>
    <property type="evidence" value="ECO:0007669"/>
    <property type="project" value="InterPro"/>
</dbReference>
<dbReference type="Gene3D" id="2.160.20.70">
    <property type="match status" value="1"/>
</dbReference>
<dbReference type="Gene3D" id="3.30.70.260">
    <property type="match status" value="1"/>
</dbReference>
<dbReference type="HAMAP" id="MF_00267">
    <property type="entry name" value="MinC"/>
    <property type="match status" value="1"/>
</dbReference>
<dbReference type="InterPro" id="IPR016098">
    <property type="entry name" value="CAP/MinC_C"/>
</dbReference>
<dbReference type="InterPro" id="IPR013033">
    <property type="entry name" value="MinC"/>
</dbReference>
<dbReference type="InterPro" id="IPR036145">
    <property type="entry name" value="MinC_C_sf"/>
</dbReference>
<dbReference type="InterPro" id="IPR007874">
    <property type="entry name" value="MinC_N"/>
</dbReference>
<dbReference type="InterPro" id="IPR005526">
    <property type="entry name" value="Septum_form_inhib_MinC_C"/>
</dbReference>
<dbReference type="NCBIfam" id="TIGR01222">
    <property type="entry name" value="minC"/>
    <property type="match status" value="1"/>
</dbReference>
<dbReference type="PANTHER" id="PTHR34108">
    <property type="entry name" value="SEPTUM SITE-DETERMINING PROTEIN MINC"/>
    <property type="match status" value="1"/>
</dbReference>
<dbReference type="PANTHER" id="PTHR34108:SF1">
    <property type="entry name" value="SEPTUM SITE-DETERMINING PROTEIN MINC"/>
    <property type="match status" value="1"/>
</dbReference>
<dbReference type="Pfam" id="PF03775">
    <property type="entry name" value="MinC_C"/>
    <property type="match status" value="1"/>
</dbReference>
<dbReference type="Pfam" id="PF05209">
    <property type="entry name" value="MinC_N"/>
    <property type="match status" value="1"/>
</dbReference>
<dbReference type="SUPFAM" id="SSF63848">
    <property type="entry name" value="Cell-division inhibitor MinC, C-terminal domain"/>
    <property type="match status" value="1"/>
</dbReference>
<feature type="chain" id="PRO_1000047820" description="Probable septum site-determining protein MinC">
    <location>
        <begin position="1"/>
        <end position="256"/>
    </location>
</feature>
<feature type="region of interest" description="Disordered" evidence="2">
    <location>
        <begin position="105"/>
        <end position="143"/>
    </location>
</feature>
<feature type="compositionally biased region" description="Low complexity" evidence="2">
    <location>
        <begin position="120"/>
        <end position="142"/>
    </location>
</feature>
<reference key="1">
    <citation type="submission" date="2007-03" db="EMBL/GenBank/DDBJ databases">
        <title>Complete sequence of chromosome 1 of Burkholderia vietnamiensis G4.</title>
        <authorList>
            <consortium name="US DOE Joint Genome Institute"/>
            <person name="Copeland A."/>
            <person name="Lucas S."/>
            <person name="Lapidus A."/>
            <person name="Barry K."/>
            <person name="Detter J.C."/>
            <person name="Glavina del Rio T."/>
            <person name="Hammon N."/>
            <person name="Israni S."/>
            <person name="Dalin E."/>
            <person name="Tice H."/>
            <person name="Pitluck S."/>
            <person name="Chain P."/>
            <person name="Malfatti S."/>
            <person name="Shin M."/>
            <person name="Vergez L."/>
            <person name="Schmutz J."/>
            <person name="Larimer F."/>
            <person name="Land M."/>
            <person name="Hauser L."/>
            <person name="Kyrpides N."/>
            <person name="Tiedje J."/>
            <person name="Richardson P."/>
        </authorList>
    </citation>
    <scope>NUCLEOTIDE SEQUENCE [LARGE SCALE GENOMIC DNA]</scope>
    <source>
        <strain>G4 / LMG 22486</strain>
    </source>
</reference>
<proteinExistence type="inferred from homology"/>
<protein>
    <recommendedName>
        <fullName evidence="1">Probable septum site-determining protein MinC</fullName>
    </recommendedName>
</protein>
<evidence type="ECO:0000255" key="1">
    <source>
        <dbReference type="HAMAP-Rule" id="MF_00267"/>
    </source>
</evidence>
<evidence type="ECO:0000256" key="2">
    <source>
        <dbReference type="SAM" id="MobiDB-lite"/>
    </source>
</evidence>
<organism>
    <name type="scientific">Burkholderia vietnamiensis (strain G4 / LMG 22486)</name>
    <name type="common">Burkholderia cepacia (strain R1808)</name>
    <dbReference type="NCBI Taxonomy" id="269482"/>
    <lineage>
        <taxon>Bacteria</taxon>
        <taxon>Pseudomonadati</taxon>
        <taxon>Pseudomonadota</taxon>
        <taxon>Betaproteobacteria</taxon>
        <taxon>Burkholderiales</taxon>
        <taxon>Burkholderiaceae</taxon>
        <taxon>Burkholderia</taxon>
        <taxon>Burkholderia cepacia complex</taxon>
    </lineage>
</organism>
<name>MINC_BURVG</name>
<comment type="function">
    <text evidence="1">Cell division inhibitor that blocks the formation of polar Z ring septums. Rapidly oscillates between the poles of the cell to destabilize FtsZ filaments that have formed before they mature into polar Z rings. Prevents FtsZ polymerization.</text>
</comment>
<comment type="subunit">
    <text evidence="1">Interacts with MinD and FtsZ.</text>
</comment>
<comment type="similarity">
    <text evidence="1">Belongs to the MinC family.</text>
</comment>
<gene>
    <name evidence="1" type="primary">minC</name>
    <name type="ordered locus">Bcep1808_0899</name>
</gene>